<reference key="1">
    <citation type="journal article" date="2004" name="Syst. Bot.">
        <title>Phylogeny of horsetails (Equisetum) based on the chloroplast rps4 gene and adjacent noncoding sequences.</title>
        <authorList>
            <person name="Guillon J.-M."/>
        </authorList>
        <dbReference type="AGRICOLA" id="IND43653535"/>
    </citation>
    <scope>NUCLEOTIDE SEQUENCE [GENOMIC DNA]</scope>
</reference>
<geneLocation type="chloroplast"/>
<proteinExistence type="inferred from homology"/>
<evidence type="ECO:0000250" key="1"/>
<evidence type="ECO:0000305" key="2"/>
<feature type="chain" id="PRO_0000132577" description="Small ribosomal subunit protein uS4c">
    <location>
        <begin position="1"/>
        <end position="207"/>
    </location>
</feature>
<feature type="domain" description="S4 RNA-binding">
    <location>
        <begin position="92"/>
        <end position="153"/>
    </location>
</feature>
<name>RR4_EQUHY</name>
<accession>Q6H9L1</accession>
<keyword id="KW-0150">Chloroplast</keyword>
<keyword id="KW-0934">Plastid</keyword>
<keyword id="KW-0687">Ribonucleoprotein</keyword>
<keyword id="KW-0689">Ribosomal protein</keyword>
<keyword id="KW-0694">RNA-binding</keyword>
<keyword id="KW-0699">rRNA-binding</keyword>
<gene>
    <name type="primary">rps4</name>
</gene>
<comment type="function">
    <text evidence="1">One of the primary rRNA binding proteins, it binds directly to 16S rRNA where it nucleates assembly of the body of the 30S subunit.</text>
</comment>
<comment type="function">
    <text evidence="1">With S5 and S12 plays an important role in translational accuracy.</text>
</comment>
<comment type="subunit">
    <text evidence="1">Part of the 30S ribosomal subunit. Contacts protein S5. The interaction surface between S4 and S5 is involved in control of translational fidelity (By similarity).</text>
</comment>
<comment type="subcellular location">
    <subcellularLocation>
        <location>Plastid</location>
        <location>Chloroplast</location>
    </subcellularLocation>
</comment>
<comment type="similarity">
    <text evidence="2">Belongs to the universal ribosomal protein uS4 family.</text>
</comment>
<organism>
    <name type="scientific">Equisetum hyemale</name>
    <name type="common">Dutch rush</name>
    <name type="synonym">Scouring-rush horsetail</name>
    <dbReference type="NCBI Taxonomy" id="3262"/>
    <lineage>
        <taxon>Eukaryota</taxon>
        <taxon>Viridiplantae</taxon>
        <taxon>Streptophyta</taxon>
        <taxon>Embryophyta</taxon>
        <taxon>Tracheophyta</taxon>
        <taxon>Polypodiopsida</taxon>
        <taxon>Equisetidae</taxon>
        <taxon>Equisetales</taxon>
        <taxon>Equisetaceae</taxon>
        <taxon>Equisetum</taxon>
    </lineage>
</organism>
<dbReference type="EMBL" id="AJ583682">
    <property type="protein sequence ID" value="CAE47536.1"/>
    <property type="molecule type" value="Genomic_DNA"/>
</dbReference>
<dbReference type="SMR" id="Q6H9L1"/>
<dbReference type="GO" id="GO:0009507">
    <property type="term" value="C:chloroplast"/>
    <property type="evidence" value="ECO:0007669"/>
    <property type="project" value="UniProtKB-SubCell"/>
</dbReference>
<dbReference type="GO" id="GO:0015935">
    <property type="term" value="C:small ribosomal subunit"/>
    <property type="evidence" value="ECO:0007669"/>
    <property type="project" value="InterPro"/>
</dbReference>
<dbReference type="GO" id="GO:0019843">
    <property type="term" value="F:rRNA binding"/>
    <property type="evidence" value="ECO:0007669"/>
    <property type="project" value="UniProtKB-UniRule"/>
</dbReference>
<dbReference type="GO" id="GO:0003735">
    <property type="term" value="F:structural constituent of ribosome"/>
    <property type="evidence" value="ECO:0007669"/>
    <property type="project" value="InterPro"/>
</dbReference>
<dbReference type="GO" id="GO:0042274">
    <property type="term" value="P:ribosomal small subunit biogenesis"/>
    <property type="evidence" value="ECO:0007669"/>
    <property type="project" value="TreeGrafter"/>
</dbReference>
<dbReference type="GO" id="GO:0006412">
    <property type="term" value="P:translation"/>
    <property type="evidence" value="ECO:0007669"/>
    <property type="project" value="UniProtKB-UniRule"/>
</dbReference>
<dbReference type="CDD" id="cd00165">
    <property type="entry name" value="S4"/>
    <property type="match status" value="1"/>
</dbReference>
<dbReference type="FunFam" id="3.10.290.10:FF:000001">
    <property type="entry name" value="30S ribosomal protein S4"/>
    <property type="match status" value="1"/>
</dbReference>
<dbReference type="FunFam" id="1.10.1050.10:FF:000002">
    <property type="entry name" value="30S ribosomal protein S4, chloroplastic"/>
    <property type="match status" value="1"/>
</dbReference>
<dbReference type="Gene3D" id="1.10.1050.10">
    <property type="entry name" value="Ribosomal Protein S4 Delta 41, Chain A, domain 1"/>
    <property type="match status" value="1"/>
</dbReference>
<dbReference type="Gene3D" id="3.10.290.10">
    <property type="entry name" value="RNA-binding S4 domain"/>
    <property type="match status" value="1"/>
</dbReference>
<dbReference type="HAMAP" id="MF_01306_B">
    <property type="entry name" value="Ribosomal_uS4_B"/>
    <property type="match status" value="1"/>
</dbReference>
<dbReference type="InterPro" id="IPR022801">
    <property type="entry name" value="Ribosomal_uS4"/>
</dbReference>
<dbReference type="InterPro" id="IPR005709">
    <property type="entry name" value="Ribosomal_uS4_bac-type"/>
</dbReference>
<dbReference type="InterPro" id="IPR018079">
    <property type="entry name" value="Ribosomal_uS4_CS"/>
</dbReference>
<dbReference type="InterPro" id="IPR001912">
    <property type="entry name" value="Ribosomal_uS4_N"/>
</dbReference>
<dbReference type="InterPro" id="IPR002942">
    <property type="entry name" value="S4_RNA-bd"/>
</dbReference>
<dbReference type="InterPro" id="IPR036986">
    <property type="entry name" value="S4_RNA-bd_sf"/>
</dbReference>
<dbReference type="NCBIfam" id="NF003717">
    <property type="entry name" value="PRK05327.1"/>
    <property type="match status" value="1"/>
</dbReference>
<dbReference type="NCBIfam" id="TIGR01017">
    <property type="entry name" value="rpsD_bact"/>
    <property type="match status" value="1"/>
</dbReference>
<dbReference type="PANTHER" id="PTHR11831">
    <property type="entry name" value="30S 40S RIBOSOMAL PROTEIN"/>
    <property type="match status" value="1"/>
</dbReference>
<dbReference type="PANTHER" id="PTHR11831:SF4">
    <property type="entry name" value="SMALL RIBOSOMAL SUBUNIT PROTEIN US4M"/>
    <property type="match status" value="1"/>
</dbReference>
<dbReference type="Pfam" id="PF00163">
    <property type="entry name" value="Ribosomal_S4"/>
    <property type="match status" value="1"/>
</dbReference>
<dbReference type="Pfam" id="PF01479">
    <property type="entry name" value="S4"/>
    <property type="match status" value="1"/>
</dbReference>
<dbReference type="SMART" id="SM01390">
    <property type="entry name" value="Ribosomal_S4"/>
    <property type="match status" value="1"/>
</dbReference>
<dbReference type="SMART" id="SM00363">
    <property type="entry name" value="S4"/>
    <property type="match status" value="1"/>
</dbReference>
<dbReference type="SUPFAM" id="SSF55174">
    <property type="entry name" value="Alpha-L RNA-binding motif"/>
    <property type="match status" value="1"/>
</dbReference>
<dbReference type="PROSITE" id="PS00632">
    <property type="entry name" value="RIBOSOMAL_S4"/>
    <property type="match status" value="1"/>
</dbReference>
<dbReference type="PROSITE" id="PS50889">
    <property type="entry name" value="S4"/>
    <property type="match status" value="1"/>
</dbReference>
<sequence>MSRYRGPRLRIIRRLQNLPGLTNKLVESKKKKVSGSDQSIQKKVSQYGIRLEAKQRLRFNYGLTERQLLNYVRIARCAKGSTGQILLQLLEMRLDNILFRLGFVPTIPSARQLINHRHILVNNRIVDVPSFHCKPKDIITIEAPKTYQSILSKRLESFAKDQIPEHLTLSLSEPKKPKGFVNYLINRESIGLKINELLVVEYYSRKA</sequence>
<protein>
    <recommendedName>
        <fullName evidence="2">Small ribosomal subunit protein uS4c</fullName>
    </recommendedName>
    <alternativeName>
        <fullName>30S ribosomal protein S4, chloroplastic</fullName>
    </alternativeName>
</protein>